<gene>
    <name type="primary">SSM4</name>
    <name type="synonym">DOA10</name>
    <name type="ordered locus">YIL030C</name>
    <name type="ORF">YI3299.01C</name>
    <name type="ORF">YI9905.18C</name>
</gene>
<evidence type="ECO:0000255" key="1"/>
<evidence type="ECO:0000255" key="2">
    <source>
        <dbReference type="PROSITE-ProRule" id="PRU00623"/>
    </source>
</evidence>
<evidence type="ECO:0000256" key="3">
    <source>
        <dbReference type="SAM" id="MobiDB-lite"/>
    </source>
</evidence>
<evidence type="ECO:0000269" key="4">
    <source>
    </source>
</evidence>
<evidence type="ECO:0000269" key="5">
    <source>
    </source>
</evidence>
<evidence type="ECO:0000269" key="6">
    <source>
    </source>
</evidence>
<evidence type="ECO:0000269" key="7">
    <source>
    </source>
</evidence>
<evidence type="ECO:0000269" key="8">
    <source>
    </source>
</evidence>
<evidence type="ECO:0000269" key="9">
    <source>
    </source>
</evidence>
<evidence type="ECO:0000269" key="10">
    <source>
    </source>
</evidence>
<evidence type="ECO:0000269" key="11">
    <source>
    </source>
</evidence>
<evidence type="ECO:0000269" key="12">
    <source>
    </source>
</evidence>
<evidence type="ECO:0000269" key="13">
    <source>
    </source>
</evidence>
<evidence type="ECO:0000305" key="14"/>
<evidence type="ECO:0007744" key="15">
    <source>
    </source>
</evidence>
<evidence type="ECO:0007829" key="16">
    <source>
        <dbReference type="PDB" id="2M6M"/>
    </source>
</evidence>
<evidence type="ECO:0007829" key="17">
    <source>
        <dbReference type="PDB" id="8TQM"/>
    </source>
</evidence>
<reference key="1">
    <citation type="journal article" date="1994" name="Mol. Gen. Genet.">
        <title>Inactivation of SSM4, a new Saccharomyces cerevisiae gene, suppresses mRNA instability due to RNA14 mutations.</title>
        <authorList>
            <person name="Mandart E."/>
            <person name="Dufour M.-E."/>
            <person name="Lacroute F."/>
        </authorList>
    </citation>
    <scope>NUCLEOTIDE SEQUENCE [GENOMIC DNA]</scope>
    <source>
        <strain>ATCC 28383 / FL100 / VTT C-80102</strain>
    </source>
</reference>
<reference key="2">
    <citation type="journal article" date="1997" name="Nature">
        <title>The nucleotide sequence of Saccharomyces cerevisiae chromosome IX.</title>
        <authorList>
            <person name="Churcher C.M."/>
            <person name="Bowman S."/>
            <person name="Badcock K."/>
            <person name="Bankier A.T."/>
            <person name="Brown D."/>
            <person name="Chillingworth T."/>
            <person name="Connor R."/>
            <person name="Devlin K."/>
            <person name="Gentles S."/>
            <person name="Hamlin N."/>
            <person name="Harris D.E."/>
            <person name="Horsnell T."/>
            <person name="Hunt S."/>
            <person name="Jagels K."/>
            <person name="Jones M."/>
            <person name="Lye G."/>
            <person name="Moule S."/>
            <person name="Odell C."/>
            <person name="Pearson D."/>
            <person name="Rajandream M.A."/>
            <person name="Rice P."/>
            <person name="Rowley N."/>
            <person name="Skelton J."/>
            <person name="Smith V."/>
            <person name="Walsh S.V."/>
            <person name="Whitehead S."/>
            <person name="Barrell B.G."/>
        </authorList>
    </citation>
    <scope>NUCLEOTIDE SEQUENCE [LARGE SCALE GENOMIC DNA]</scope>
    <source>
        <strain>ATCC 204508 / S288c</strain>
    </source>
</reference>
<reference key="3">
    <citation type="journal article" date="2014" name="G3 (Bethesda)">
        <title>The reference genome sequence of Saccharomyces cerevisiae: Then and now.</title>
        <authorList>
            <person name="Engel S.R."/>
            <person name="Dietrich F.S."/>
            <person name="Fisk D.G."/>
            <person name="Binkley G."/>
            <person name="Balakrishnan R."/>
            <person name="Costanzo M.C."/>
            <person name="Dwight S.S."/>
            <person name="Hitz B.C."/>
            <person name="Karra K."/>
            <person name="Nash R.S."/>
            <person name="Weng S."/>
            <person name="Wong E.D."/>
            <person name="Lloyd P."/>
            <person name="Skrzypek M.S."/>
            <person name="Miyasato S.R."/>
            <person name="Simison M."/>
            <person name="Cherry J.M."/>
        </authorList>
    </citation>
    <scope>GENOME REANNOTATION</scope>
    <source>
        <strain>ATCC 204508 / S288c</strain>
    </source>
</reference>
<reference key="4">
    <citation type="journal article" date="2001" name="Genes Dev.">
        <title>A conserved ubiquitin ligase of the nuclear envelope/endoplasmic reticulum that functions in both ER-associated and Matalpha2 repressor degradation.</title>
        <authorList>
            <person name="Swanson R."/>
            <person name="Locher M."/>
            <person name="Hochstrasser M."/>
        </authorList>
    </citation>
    <scope>FUNCTION</scope>
    <scope>SUBCELLULAR LOCATION</scope>
</reference>
<reference key="5">
    <citation type="journal article" date="2005" name="Nat. Cell Biol.">
        <title>Ubx2 links the Cdc48 complex to ER-associated protein degradation.</title>
        <authorList>
            <person name="Neuber O."/>
            <person name="Jarosch E."/>
            <person name="Volkwein C."/>
            <person name="Walter J."/>
            <person name="Sommer T."/>
        </authorList>
    </citation>
    <scope>INTERACTION WITH CDC48; UBX2; UBC6 AND UBC7</scope>
</reference>
<reference key="6">
    <citation type="journal article" date="2005" name="Nat. Cell Biol.">
        <title>Membrane-bound Ubx2 recruits Cdc48 to ubiquitin ligases and their substrates to ensure efficient ER-associated protein degradation.</title>
        <authorList>
            <person name="Schuberth C."/>
            <person name="Buchberger A."/>
        </authorList>
    </citation>
    <scope>FUNCTION</scope>
    <scope>INTERACTION WITH UBX2; CDC48 AND UFD1</scope>
</reference>
<reference key="7">
    <citation type="journal article" date="2006" name="Cell">
        <title>Distinct ubiquitin-ligase complexes define convergent pathways for the degradation of ER proteins.</title>
        <authorList>
            <person name="Carvalho P."/>
            <person name="Goder V."/>
            <person name="Rapoport T.A."/>
        </authorList>
    </citation>
    <scope>FUNCTION</scope>
    <scope>IDENTIFICATION IN THE DOA10 COMPLEX</scope>
</reference>
<reference key="8">
    <citation type="journal article" date="2006" name="EMBO J.">
        <title>Membrane and soluble substrates of the Doa10 ubiquitin ligase are degraded by distinct pathways.</title>
        <authorList>
            <person name="Ravid T."/>
            <person name="Kreft S.G."/>
            <person name="Hochstrasser M."/>
        </authorList>
    </citation>
    <scope>FUNCTION</scope>
</reference>
<reference key="9">
    <citation type="journal article" date="2006" name="J. Biol. Chem.">
        <title>Membrane topology of the yeast endoplasmic reticulum-localized ubiquitin ligase Doa10 and comparison with its human ortholog TEB4 (MARCH-VI).</title>
        <authorList>
            <person name="Kreft S.G."/>
            <person name="Wang L."/>
            <person name="Hochstrasser M."/>
        </authorList>
    </citation>
    <scope>TOPOLOGY</scope>
</reference>
<reference key="10">
    <citation type="journal article" date="2006" name="Nature">
        <title>Spatially regulated ubiquitin ligation by an ER/nuclear membrane ligase.</title>
        <authorList>
            <person name="Deng M."/>
            <person name="Hochstrasser M."/>
        </authorList>
    </citation>
    <scope>SUBCELLULAR LOCATION</scope>
    <scope>FUNCTION</scope>
</reference>
<reference key="11">
    <citation type="journal article" date="2008" name="J. Biol. Chem.">
        <title>Degradation of a cytosolic protein requires endoplasmic reticulum-associated degradation machinery.</title>
        <authorList>
            <person name="Metzger M.B."/>
            <person name="Maurer M.J."/>
            <person name="Dancy B.M."/>
            <person name="Michaelis S."/>
        </authorList>
    </citation>
    <scope>FUNCTION IN CYTOSOLIC PROTEIN DEGRADATION</scope>
</reference>
<reference key="12">
    <citation type="journal article" date="2009" name="Science">
        <title>Global analysis of Cdk1 substrate phosphorylation sites provides insights into evolution.</title>
        <authorList>
            <person name="Holt L.J."/>
            <person name="Tuch B.B."/>
            <person name="Villen J."/>
            <person name="Johnson A.D."/>
            <person name="Gygi S.P."/>
            <person name="Morgan D.O."/>
        </authorList>
    </citation>
    <scope>IDENTIFICATION BY MASS SPECTROMETRY [LARGE SCALE ANALYSIS]</scope>
</reference>
<reference key="13">
    <citation type="journal article" date="2010" name="J. Biol. Chem.">
        <title>Ubiquitin chain elongation enzyme Ufd2 regulates a subset of Doa10 substrates.</title>
        <authorList>
            <person name="Liu C."/>
            <person name="van Dyk D."/>
            <person name="Xu P."/>
            <person name="Choe V."/>
            <person name="Pan H."/>
            <person name="Peng J."/>
            <person name="Andrews B."/>
            <person name="Rao H."/>
        </authorList>
    </citation>
    <scope>INTERACTION WITH PEX29</scope>
</reference>
<reference key="14">
    <citation type="journal article" date="2010" name="Science">
        <title>N-terminal acetylation of cellular proteins creates specific degradation signals.</title>
        <authorList>
            <person name="Hwang C.S."/>
            <person name="Shemorry A."/>
            <person name="Varshavsky A."/>
        </authorList>
    </citation>
    <scope>FUNCTION IN N-ACETYLATED PROTEIN DEGRADATION</scope>
</reference>
<reference key="15">
    <citation type="journal article" date="2012" name="Proc. Natl. Acad. Sci. U.S.A.">
        <title>N-terminal acetylome analyses and functional insights of the N-terminal acetyltransferase NatB.</title>
        <authorList>
            <person name="Van Damme P."/>
            <person name="Lasa M."/>
            <person name="Polevoda B."/>
            <person name="Gazquez C."/>
            <person name="Elosegui-Artola A."/>
            <person name="Kim D.S."/>
            <person name="De Juan-Pardo E."/>
            <person name="Demeyer K."/>
            <person name="Hole K."/>
            <person name="Larrea E."/>
            <person name="Timmerman E."/>
            <person name="Prieto J."/>
            <person name="Arnesen T."/>
            <person name="Sherman F."/>
            <person name="Gevaert K."/>
            <person name="Aldabe R."/>
        </authorList>
    </citation>
    <scope>ACETYLATION [LARGE SCALE ANALYSIS] AT MET-1</scope>
    <scope>IDENTIFICATION BY MASS SPECTROMETRY [LARGE SCALE ANALYSIS]</scope>
</reference>
<reference key="16">
    <citation type="journal article" date="2019" name="Mol. Cell">
        <title>Msp1 clears mistargeted proteins by facilitating their transfer from mitochondria to the ER.</title>
        <authorList>
            <person name="Matsumoto S."/>
            <person name="Nakatsukasa K."/>
            <person name="Kakuta C."/>
            <person name="Tamura Y."/>
            <person name="Esaki M."/>
            <person name="Endo T."/>
        </authorList>
    </citation>
    <scope>FUNCTION</scope>
    <scope>CATALYTIC ACTIVITY</scope>
    <scope>PATHWAY</scope>
</reference>
<name>DOA10_YEAST</name>
<feature type="chain" id="PRO_0000072214" description="ERAD-associated E3 ubiquitin-protein ligase DOA10">
    <location>
        <begin position="1"/>
        <end position="1319"/>
    </location>
</feature>
<feature type="topological domain" description="Cytoplasmic" evidence="1">
    <location>
        <begin position="1"/>
        <end position="131"/>
    </location>
</feature>
<feature type="transmembrane region" description="Helical" evidence="1">
    <location>
        <begin position="132"/>
        <end position="152"/>
    </location>
</feature>
<feature type="topological domain" description="Lumenal" evidence="1">
    <location>
        <begin position="153"/>
        <end position="203"/>
    </location>
</feature>
<feature type="transmembrane region" description="Helical" evidence="1">
    <location>
        <begin position="204"/>
        <end position="224"/>
    </location>
</feature>
<feature type="topological domain" description="Cytoplasmic" evidence="1">
    <location>
        <begin position="225"/>
        <end position="468"/>
    </location>
</feature>
<feature type="transmembrane region" description="Helical" evidence="1">
    <location>
        <begin position="469"/>
        <end position="489"/>
    </location>
</feature>
<feature type="topological domain" description="Lumenal" evidence="1">
    <location>
        <begin position="490"/>
        <end position="491"/>
    </location>
</feature>
<feature type="transmembrane region" description="Helical" evidence="1">
    <location>
        <begin position="492"/>
        <end position="512"/>
    </location>
</feature>
<feature type="topological domain" description="Cytoplasmic" evidence="1">
    <location>
        <begin position="513"/>
        <end position="626"/>
    </location>
</feature>
<feature type="transmembrane region" description="Helical" evidence="1">
    <location>
        <begin position="627"/>
        <end position="647"/>
    </location>
</feature>
<feature type="topological domain" description="Lumenal" evidence="1">
    <location>
        <begin position="648"/>
        <end position="660"/>
    </location>
</feature>
<feature type="transmembrane region" description="Helical" evidence="1">
    <location>
        <begin position="661"/>
        <end position="681"/>
    </location>
</feature>
<feature type="topological domain" description="Cytoplasmic" evidence="1">
    <location>
        <begin position="682"/>
        <end position="739"/>
    </location>
</feature>
<feature type="transmembrane region" description="Helical" evidence="1">
    <location>
        <begin position="740"/>
        <end position="760"/>
    </location>
</feature>
<feature type="topological domain" description="Lumenal" evidence="1">
    <location>
        <begin position="761"/>
        <end position="777"/>
    </location>
</feature>
<feature type="transmembrane region" description="Helical" evidence="1">
    <location>
        <begin position="778"/>
        <end position="797"/>
    </location>
</feature>
<feature type="topological domain" description="Cytoplasmic" evidence="1">
    <location>
        <begin position="798"/>
        <end position="965"/>
    </location>
</feature>
<feature type="transmembrane region" description="Helical" evidence="1">
    <location>
        <begin position="966"/>
        <end position="986"/>
    </location>
</feature>
<feature type="topological domain" description="Lumenal" evidence="1">
    <location>
        <begin position="987"/>
        <end position="1019"/>
    </location>
</feature>
<feature type="transmembrane region" description="Helical" evidence="1">
    <location>
        <begin position="1020"/>
        <end position="1040"/>
    </location>
</feature>
<feature type="topological domain" description="Cytoplasmic" evidence="1">
    <location>
        <begin position="1041"/>
        <end position="1113"/>
    </location>
</feature>
<feature type="transmembrane region" description="Helical" evidence="1">
    <location>
        <begin position="1114"/>
        <end position="1134"/>
    </location>
</feature>
<feature type="topological domain" description="Lumenal" evidence="1">
    <location>
        <begin position="1135"/>
        <end position="1168"/>
    </location>
</feature>
<feature type="transmembrane region" description="Helical" evidence="1">
    <location>
        <begin position="1169"/>
        <end position="1189"/>
    </location>
</feature>
<feature type="topological domain" description="Cytoplasmic" evidence="1">
    <location>
        <begin position="1190"/>
        <end position="1213"/>
    </location>
</feature>
<feature type="transmembrane region" description="Helical" evidence="1">
    <location>
        <begin position="1214"/>
        <end position="1234"/>
    </location>
</feature>
<feature type="topological domain" description="Lumenal" evidence="1">
    <location>
        <begin position="1235"/>
        <end position="1270"/>
    </location>
</feature>
<feature type="transmembrane region" description="Helical" evidence="1">
    <location>
        <begin position="1271"/>
        <end position="1291"/>
    </location>
</feature>
<feature type="topological domain" description="Cytoplasmic" evidence="1">
    <location>
        <begin position="1292"/>
        <end position="1319"/>
    </location>
</feature>
<feature type="zinc finger region" description="RING-CH-type" evidence="2">
    <location>
        <begin position="31"/>
        <end position="100"/>
    </location>
</feature>
<feature type="region of interest" description="Disordered" evidence="3">
    <location>
        <begin position="291"/>
        <end position="315"/>
    </location>
</feature>
<feature type="region of interest" description="Disordered" evidence="3">
    <location>
        <begin position="329"/>
        <end position="381"/>
    </location>
</feature>
<feature type="compositionally biased region" description="Low complexity" evidence="3">
    <location>
        <begin position="291"/>
        <end position="306"/>
    </location>
</feature>
<feature type="binding site" evidence="2">
    <location>
        <position position="39"/>
    </location>
    <ligand>
        <name>Zn(2+)</name>
        <dbReference type="ChEBI" id="CHEBI:29105"/>
        <label>1</label>
    </ligand>
</feature>
<feature type="binding site" evidence="2">
    <location>
        <position position="42"/>
    </location>
    <ligand>
        <name>Zn(2+)</name>
        <dbReference type="ChEBI" id="CHEBI:29105"/>
        <label>1</label>
    </ligand>
</feature>
<feature type="binding site" evidence="2">
    <location>
        <position position="56"/>
    </location>
    <ligand>
        <name>Zn(2+)</name>
        <dbReference type="ChEBI" id="CHEBI:29105"/>
        <label>2</label>
    </ligand>
</feature>
<feature type="binding site" evidence="2">
    <location>
        <position position="58"/>
    </location>
    <ligand>
        <name>Zn(2+)</name>
        <dbReference type="ChEBI" id="CHEBI:29105"/>
        <label>2</label>
    </ligand>
</feature>
<feature type="binding site" evidence="2">
    <location>
        <position position="66"/>
    </location>
    <ligand>
        <name>Zn(2+)</name>
        <dbReference type="ChEBI" id="CHEBI:29105"/>
        <label>1</label>
    </ligand>
</feature>
<feature type="binding site" evidence="2">
    <location>
        <position position="69"/>
    </location>
    <ligand>
        <name>Zn(2+)</name>
        <dbReference type="ChEBI" id="CHEBI:29105"/>
        <label>1</label>
    </ligand>
</feature>
<feature type="binding site" evidence="2">
    <location>
        <position position="90"/>
    </location>
    <ligand>
        <name>Zn(2+)</name>
        <dbReference type="ChEBI" id="CHEBI:29105"/>
        <label>2</label>
    </ligand>
</feature>
<feature type="binding site" evidence="2">
    <location>
        <position position="93"/>
    </location>
    <ligand>
        <name>Zn(2+)</name>
        <dbReference type="ChEBI" id="CHEBI:29105"/>
        <label>2</label>
    </ligand>
</feature>
<feature type="modified residue" description="N-acetylmethionine" evidence="15">
    <location>
        <position position="1"/>
    </location>
</feature>
<feature type="sequence conflict" description="In Ref. 1; CAA54133." evidence="14" ref="1">
    <original>L</original>
    <variation>F</variation>
    <location>
        <position position="241"/>
    </location>
</feature>
<feature type="sequence conflict" description="In Ref. 1; CAA54133." evidence="14" ref="1">
    <original>A</original>
    <variation>T</variation>
    <location>
        <position position="743"/>
    </location>
</feature>
<feature type="sequence conflict" description="In Ref. 1; CAA54133." evidence="14" ref="1">
    <original>N</original>
    <variation>D</variation>
    <location>
        <position position="1085"/>
    </location>
</feature>
<feature type="sequence conflict" description="In Ref. 1; CAA54133." evidence="14" ref="1">
    <original>Y</original>
    <variation>F</variation>
    <location>
        <position position="1186"/>
    </location>
</feature>
<feature type="strand" evidence="16">
    <location>
        <begin position="40"/>
        <end position="42"/>
    </location>
</feature>
<feature type="strand" evidence="16">
    <location>
        <begin position="48"/>
        <end position="50"/>
    </location>
</feature>
<feature type="helix" evidence="16">
    <location>
        <begin position="67"/>
        <end position="76"/>
    </location>
</feature>
<feature type="strand" evidence="16">
    <location>
        <begin position="91"/>
        <end position="93"/>
    </location>
</feature>
<feature type="helix" evidence="17">
    <location>
        <begin position="114"/>
        <end position="161"/>
    </location>
</feature>
<feature type="strand" evidence="17">
    <location>
        <begin position="165"/>
        <end position="168"/>
    </location>
</feature>
<feature type="helix" evidence="17">
    <location>
        <begin position="170"/>
        <end position="175"/>
    </location>
</feature>
<feature type="helix" evidence="17">
    <location>
        <begin position="188"/>
        <end position="225"/>
    </location>
</feature>
<feature type="helix" evidence="17">
    <location>
        <begin position="227"/>
        <end position="237"/>
    </location>
</feature>
<feature type="helix" evidence="17">
    <location>
        <begin position="464"/>
        <end position="521"/>
    </location>
</feature>
<feature type="helix" evidence="17">
    <location>
        <begin position="546"/>
        <end position="562"/>
    </location>
</feature>
<feature type="helix" evidence="17">
    <location>
        <begin position="570"/>
        <end position="596"/>
    </location>
</feature>
<feature type="strand" evidence="17">
    <location>
        <begin position="601"/>
        <end position="603"/>
    </location>
</feature>
<feature type="helix" evidence="17">
    <location>
        <begin position="608"/>
        <end position="634"/>
    </location>
</feature>
<feature type="helix" evidence="17">
    <location>
        <begin position="636"/>
        <end position="648"/>
    </location>
</feature>
<feature type="helix" evidence="17">
    <location>
        <begin position="650"/>
        <end position="654"/>
    </location>
</feature>
<feature type="helix" evidence="17">
    <location>
        <begin position="663"/>
        <end position="666"/>
    </location>
</feature>
<feature type="helix" evidence="17">
    <location>
        <begin position="673"/>
        <end position="699"/>
    </location>
</feature>
<feature type="turn" evidence="17">
    <location>
        <begin position="703"/>
        <end position="706"/>
    </location>
</feature>
<feature type="helix" evidence="17">
    <location>
        <begin position="719"/>
        <end position="725"/>
    </location>
</feature>
<feature type="helix" evidence="17">
    <location>
        <begin position="728"/>
        <end position="755"/>
    </location>
</feature>
<feature type="turn" evidence="17">
    <location>
        <begin position="756"/>
        <end position="761"/>
    </location>
</feature>
<feature type="helix" evidence="17">
    <location>
        <begin position="771"/>
        <end position="773"/>
    </location>
</feature>
<feature type="helix" evidence="17">
    <location>
        <begin position="781"/>
        <end position="799"/>
    </location>
</feature>
<feature type="helix" evidence="17">
    <location>
        <begin position="803"/>
        <end position="822"/>
    </location>
</feature>
<feature type="helix" evidence="17">
    <location>
        <begin position="825"/>
        <end position="828"/>
    </location>
</feature>
<feature type="helix" evidence="17">
    <location>
        <begin position="834"/>
        <end position="837"/>
    </location>
</feature>
<feature type="strand" evidence="17">
    <location>
        <begin position="838"/>
        <end position="844"/>
    </location>
</feature>
<feature type="helix" evidence="17">
    <location>
        <begin position="845"/>
        <end position="848"/>
    </location>
</feature>
<feature type="turn" evidence="17">
    <location>
        <begin position="849"/>
        <end position="851"/>
    </location>
</feature>
<feature type="helix" evidence="17">
    <location>
        <begin position="852"/>
        <end position="858"/>
    </location>
</feature>
<feature type="turn" evidence="17">
    <location>
        <begin position="862"/>
        <end position="864"/>
    </location>
</feature>
<feature type="helix" evidence="17">
    <location>
        <begin position="869"/>
        <end position="878"/>
    </location>
</feature>
<feature type="strand" evidence="17">
    <location>
        <begin position="884"/>
        <end position="888"/>
    </location>
</feature>
<feature type="strand" evidence="17">
    <location>
        <begin position="891"/>
        <end position="899"/>
    </location>
</feature>
<feature type="helix" evidence="17">
    <location>
        <begin position="903"/>
        <end position="906"/>
    </location>
</feature>
<feature type="strand" evidence="17">
    <location>
        <begin position="919"/>
        <end position="921"/>
    </location>
</feature>
<feature type="helix" evidence="17">
    <location>
        <begin position="925"/>
        <end position="935"/>
    </location>
</feature>
<feature type="turn" evidence="17">
    <location>
        <begin position="938"/>
        <end position="942"/>
    </location>
</feature>
<feature type="strand" evidence="17">
    <location>
        <begin position="952"/>
        <end position="957"/>
    </location>
</feature>
<feature type="helix" evidence="17">
    <location>
        <begin position="961"/>
        <end position="994"/>
    </location>
</feature>
<feature type="turn" evidence="17">
    <location>
        <begin position="995"/>
        <end position="998"/>
    </location>
</feature>
<feature type="helix" evidence="17">
    <location>
        <begin position="999"/>
        <end position="1006"/>
    </location>
</feature>
<feature type="helix" evidence="17">
    <location>
        <begin position="1012"/>
        <end position="1024"/>
    </location>
</feature>
<feature type="helix" evidence="17">
    <location>
        <begin position="1030"/>
        <end position="1051"/>
    </location>
</feature>
<feature type="helix" evidence="17">
    <location>
        <begin position="1096"/>
        <end position="1106"/>
    </location>
</feature>
<feature type="helix" evidence="17">
    <location>
        <begin position="1108"/>
        <end position="1136"/>
    </location>
</feature>
<feature type="helix" evidence="17">
    <location>
        <begin position="1138"/>
        <end position="1144"/>
    </location>
</feature>
<feature type="helix" evidence="17">
    <location>
        <begin position="1167"/>
        <end position="1194"/>
    </location>
</feature>
<feature type="strand" evidence="17">
    <location>
        <begin position="1196"/>
        <end position="1198"/>
    </location>
</feature>
<feature type="helix" evidence="17">
    <location>
        <begin position="1200"/>
        <end position="1214"/>
    </location>
</feature>
<feature type="helix" evidence="17">
    <location>
        <begin position="1216"/>
        <end position="1229"/>
    </location>
</feature>
<feature type="helix" evidence="17">
    <location>
        <begin position="1265"/>
        <end position="1292"/>
    </location>
</feature>
<sequence length="1319" mass="151455">MDVDSDVNVSRLRDELHKVANEETDTATFNDDAPSGATCRICRGEATEDNPLFHPCKCRGSIKYMHESCLLEWVASKNIDISKPGADVKCDICHYPIQFKTIYAENMPEKIPFSLLLSKSILTFFEKARLALTIGLAAVLYIIGVPLVWNMFGKLYTMMLDGSSPYPGDFLKSLIYGYDQSATPELTTRAIFYQLLQNHSFTSLQFIMIVILHIALYFQYDMIVREDVFSKMVFHKIGPRLSPKDLKSRLKERFPMMDDRMVEYLAREMRAHDENRQEQGHDRLNMPAAAADNNNNVINPRNDNVPPQDPNDHRNFENLRHVDELDHDEATEEHENNDSDNSLPSGDDSSRILPGSSSDNEEDEEAEGQQQQQQPEEEADYRDHIEPNPIDMWANRRAQNEFDDLIAAQQNAINRPNAPVFIPPPAQNRAGNVDQDEQDFGAAVGVPPAQANPDDQGQGPLVINLKLKLLNVIAYFIIAVVFTAIYLAISYLFPTFIGFGLLKIYFGIFKVILRGLCHLYYLSGAHIAYNGLTKLVPKVDVAMSWISDHLIHDIIYLYNGYTENTMKHSIFIRALPALTTYLTSVSIVCASSNLVSRGYGRENGMSNPTRRLIFQILFALKCTFKVFTLFFIELAGFPILAGVMLDFSLFCPILASNSRMLWVPSICAIWPPFSLFVYWTIGTLYMYWFAKYIGMIRKNIIRPGVLFFIRSPEDPNIKILHDSLIHPMSIQLSRLCLSMFIYAIFIVLGFGFHTRIFFPFMLKSNLLSVPEAYKPTSIISWKFNTILLTLYFTKRILESSSYVKPLLERYWKTIFKLCSRKLRLSSFILGKDTPTERGHIVYRNLFYKYIAAKNAEWSNQELFTKPKTLEQAEELFGQVRDVHAYFVPDGVLMRVPSSDIVSRNYVQTMFVPVTKDDKLLKPLDLERIKERNKRAAGEFGYLDEQNTEYDQYYIVYVPPDFRLRYMTLLGLVWLFASILMLGVTFISQALINFVCSFGFLPVVKLLLGERNKVYVAWKELSDISYSYLNIYYVCVGSVCLSKIAKDILHFTEGQNTLDEHAVDENEVEEVEHDIPERDINNAPVNNINNVEEGQGIFMAIFNSIFDSMLVKYNLMVFIAIMIAVIRTMVSWVVLTDGILACYNYLTIRVFGNSSYTIGNSKWFKYDESLLFVVWIISSMVNFGTGYKSLKLFFRNRNTSKLNFLKTMALELFKQGFLHMVIYVLPIIILSLVFLRDVSTKQIIDISHGSRSFTLSLNESFPTWTRMQDIYFGLLIALESFTFFFQATVLFIQWFKSTVQNVKDEVYTKGRALENLPDES</sequence>
<accession>P40318</accession>
<accession>D6VVQ1</accession>
<comment type="function">
    <text evidence="4 5 7 8 9 10 11 13">E3 ubiquitin-protein ligase which accepts ubiquitin specifically from endoplasmic reticulum-associated UBC6 and UBC7 E2 ligases, and transfers it to substrates promoting their degradation (PubMed:11641273, PubMed:16179952, PubMed:16437165, PubMed:16873066, PubMed:17051211, PubMed:18812321, PubMed:20110468). Mediates the degradation of a broad range of substrates, including endoplasmic reticulum membrane proteins (ERQC), soluble nuclear proteins and soluble cytoplasmic proteins (CytoQC) (PubMed:11641273, PubMed:16179952, PubMed:16437165, PubMed:16873066, PubMed:17051211, PubMed:18812321, PubMed:20110468). Component of the DOA10 ubiquitin ligase complex, which is part of the ERAD-C pathway responsible for the rapid degradation of membrane proteins with misfolded cytoplasmic domains (PubMed:16873066). ERAD-C substrates are ubiquitinated through DOA10 in conjunction with the E2 ubiquitin-conjugating enzymes UBC6 and UBC7-CUE1 (PubMed:11641273, PubMed:16179952, PubMed:16437165, PubMed:16873066, PubMed:17051211, PubMed:18812321, PubMed:20110468). Ubiquitinated substrates are then removed to the cytosol via the action of the UFD1-NPL4-CDC48/p97 (UNC) AAA ATPase complex and targeted to the proteasome (PubMed:11641273, PubMed:16179952, PubMed:16437165, PubMed:16873066, PubMed:17051211, PubMed:18812321, PubMed:20110468). Also recognizes the N-terminally acetylated residue of proteins as degradation signal (degron) (PubMed:20110468). N-terminally acetylated target proteins include MATALPHA2, TBF1, SLK19, YMR090W, HIS3, HSP104, UBP6 and ARO8 (PubMed:20110468). Catalyzes ubiquitination of mislocalized tail-anchored proteins that are extracted from the mitochondrion membrane by MSP1: following extraction, mistargeted proteins are transferred to the endoplasmic reticulum, where they are ubiquitinated by DOA10 and degraded by the proteasome (PubMed:31445887).</text>
</comment>
<comment type="catalytic activity">
    <reaction evidence="13">
        <text>S-ubiquitinyl-[E2 ubiquitin-conjugating enzyme]-L-cysteine + [acceptor protein]-L-lysine = [E2 ubiquitin-conjugating enzyme]-L-cysteine + N(6)-ubiquitinyl-[acceptor protein]-L-lysine.</text>
        <dbReference type="EC" id="2.3.2.27"/>
    </reaction>
</comment>
<comment type="pathway">
    <text evidence="13">Protein modification; protein ubiquitination.</text>
</comment>
<comment type="subunit">
    <text evidence="5 6 8 12">Component of the DOA10 ubiquitin ligase complex which contains E3 ligase SSM4/DOA10 and CDC48-binding protein UBX2/SEL1. The DOA10 complex interacts with the heterotrimeric CDC48-NPL4-UFD1 ATPase complex which is recruited by UBX2/SEL1 via its interaction with CDC48. Interacts with its associated ubiquitin conjugating enzymes UBC6 and UBC7 with its membrane anchor CUE1. Interacts with PEX29.</text>
</comment>
<comment type="interaction">
    <interactant intactId="EBI-18208">
        <id>P40318</id>
    </interactant>
    <interactant intactId="EBI-4308">
        <id>P25694</id>
        <label>CDC48</label>
    </interactant>
    <organismsDiffer>false</organismsDiffer>
    <experiments>5</experiments>
</comment>
<comment type="interaction">
    <interactant intactId="EBI-18208">
        <id>P40318</id>
    </interactant>
    <interactant intactId="EBI-27580">
        <id>P38428</id>
        <label>CUE1</label>
    </interactant>
    <organismsDiffer>false</organismsDiffer>
    <experiments>2</experiments>
</comment>
<comment type="interaction">
    <interactant intactId="EBI-18208">
        <id>P40318</id>
    </interactant>
    <interactant intactId="EBI-18383">
        <id>P12866</id>
        <label>STE6</label>
    </interactant>
    <organismsDiffer>false</organismsDiffer>
    <experiments>3</experiments>
</comment>
<comment type="interaction">
    <interactant intactId="EBI-18208">
        <id>P40318</id>
    </interactant>
    <interactant intactId="EBI-27730">
        <id>Q04228</id>
        <label>UBX2</label>
    </interactant>
    <organismsDiffer>false</organismsDiffer>
    <experiments>5</experiments>
</comment>
<comment type="subcellular location">
    <subcellularLocation>
        <location evidence="4 9">Endoplasmic reticulum membrane</location>
        <topology evidence="1">Multi-pass membrane protein</topology>
    </subcellularLocation>
    <subcellularLocation>
        <location evidence="4 9">Nucleus inner membrane</location>
        <topology evidence="1">Multi-pass membrane protein</topology>
    </subcellularLocation>
</comment>
<comment type="domain">
    <text>The RING-CH-type zinc finger domain is required for E3 ligase activity.</text>
</comment>
<comment type="similarity">
    <text evidence="14">Belongs to the DOA10/MARCH6 family.</text>
</comment>
<proteinExistence type="evidence at protein level"/>
<dbReference type="EC" id="2.3.2.27" evidence="13"/>
<dbReference type="EMBL" id="X76715">
    <property type="protein sequence ID" value="CAA54133.1"/>
    <property type="molecule type" value="Genomic_DNA"/>
</dbReference>
<dbReference type="EMBL" id="Z46881">
    <property type="protein sequence ID" value="CAA86961.1"/>
    <property type="molecule type" value="Genomic_DNA"/>
</dbReference>
<dbReference type="EMBL" id="Z46861">
    <property type="protein sequence ID" value="CAA86921.1"/>
    <property type="molecule type" value="Genomic_DNA"/>
</dbReference>
<dbReference type="EMBL" id="BK006942">
    <property type="protein sequence ID" value="DAA08517.1"/>
    <property type="molecule type" value="Genomic_DNA"/>
</dbReference>
<dbReference type="PIR" id="S49951">
    <property type="entry name" value="S49951"/>
</dbReference>
<dbReference type="RefSeq" id="NP_012234.3">
    <property type="nucleotide sequence ID" value="NM_001179380.3"/>
</dbReference>
<dbReference type="PDB" id="2M6M">
    <property type="method" value="NMR"/>
    <property type="chains" value="A=19-101"/>
</dbReference>
<dbReference type="PDB" id="8PD0">
    <property type="method" value="EM"/>
    <property type="resolution" value="3.58 A"/>
    <property type="chains" value="A=1-1319"/>
</dbReference>
<dbReference type="PDB" id="8PDA">
    <property type="method" value="EM"/>
    <property type="resolution" value="3.58 A"/>
    <property type="chains" value="A=1-1319"/>
</dbReference>
<dbReference type="PDB" id="8TQM">
    <property type="method" value="EM"/>
    <property type="resolution" value="3.20 A"/>
    <property type="chains" value="A=1-1319"/>
</dbReference>
<dbReference type="PDBsum" id="2M6M"/>
<dbReference type="PDBsum" id="8PD0"/>
<dbReference type="PDBsum" id="8PDA"/>
<dbReference type="PDBsum" id="8TQM"/>
<dbReference type="BMRB" id="P40318"/>
<dbReference type="EMDB" id="EMD-17597"/>
<dbReference type="EMDB" id="EMD-17608"/>
<dbReference type="EMDB" id="EMD-41508"/>
<dbReference type="SMR" id="P40318"/>
<dbReference type="BioGRID" id="34959">
    <property type="interactions" value="273"/>
</dbReference>
<dbReference type="ComplexPortal" id="CPX-3074">
    <property type="entry name" value="Doa10 E3 ubiquitin ligase complex"/>
</dbReference>
<dbReference type="DIP" id="DIP-7286N"/>
<dbReference type="FunCoup" id="P40318">
    <property type="interactions" value="650"/>
</dbReference>
<dbReference type="IntAct" id="P40318">
    <property type="interactions" value="83"/>
</dbReference>
<dbReference type="MINT" id="P40318"/>
<dbReference type="STRING" id="4932.YIL030C"/>
<dbReference type="TCDB" id="3.A.16.1.2">
    <property type="family name" value="the endoplasmic reticular retrotranslocon (er-rt) family"/>
</dbReference>
<dbReference type="iPTMnet" id="P40318"/>
<dbReference type="PaxDb" id="4932-YIL030C"/>
<dbReference type="PeptideAtlas" id="P40318"/>
<dbReference type="EnsemblFungi" id="YIL030C_mRNA">
    <property type="protein sequence ID" value="YIL030C"/>
    <property type="gene ID" value="YIL030C"/>
</dbReference>
<dbReference type="GeneID" id="854781"/>
<dbReference type="KEGG" id="sce:YIL030C"/>
<dbReference type="AGR" id="SGD:S000001292"/>
<dbReference type="SGD" id="S000001292">
    <property type="gene designation" value="SSM4"/>
</dbReference>
<dbReference type="VEuPathDB" id="FungiDB:YIL030C"/>
<dbReference type="eggNOG" id="KOG1609">
    <property type="taxonomic scope" value="Eukaryota"/>
</dbReference>
<dbReference type="GeneTree" id="ENSGT00940000155171"/>
<dbReference type="HOGENOM" id="CLU_006729_0_0_1"/>
<dbReference type="InParanoid" id="P40318"/>
<dbReference type="OMA" id="ALYFQYD"/>
<dbReference type="OrthoDB" id="1108038at2759"/>
<dbReference type="BioCyc" id="MetaCyc:G3O-31303-MONOMER"/>
<dbReference type="BioCyc" id="YEAST:G3O-31303-MONOMER"/>
<dbReference type="BRENDA" id="2.3.2.27">
    <property type="organism ID" value="984"/>
</dbReference>
<dbReference type="UniPathway" id="UPA00143"/>
<dbReference type="BioGRID-ORCS" id="854781">
    <property type="hits" value="1 hit in 10 CRISPR screens"/>
</dbReference>
<dbReference type="EvolutionaryTrace" id="P40318"/>
<dbReference type="PRO" id="PR:P40318"/>
<dbReference type="Proteomes" id="UP000002311">
    <property type="component" value="Chromosome IX"/>
</dbReference>
<dbReference type="RNAct" id="P40318">
    <property type="molecule type" value="protein"/>
</dbReference>
<dbReference type="GO" id="GO:0000837">
    <property type="term" value="C:Doa10p ubiquitin ligase complex"/>
    <property type="evidence" value="ECO:0000314"/>
    <property type="project" value="SGD"/>
</dbReference>
<dbReference type="GO" id="GO:0005783">
    <property type="term" value="C:endoplasmic reticulum"/>
    <property type="evidence" value="ECO:0007005"/>
    <property type="project" value="SGD"/>
</dbReference>
<dbReference type="GO" id="GO:0005789">
    <property type="term" value="C:endoplasmic reticulum membrane"/>
    <property type="evidence" value="ECO:0000314"/>
    <property type="project" value="SGD"/>
</dbReference>
<dbReference type="GO" id="GO:0016020">
    <property type="term" value="C:membrane"/>
    <property type="evidence" value="ECO:0000314"/>
    <property type="project" value="ParkinsonsUK-UCL"/>
</dbReference>
<dbReference type="GO" id="GO:0005635">
    <property type="term" value="C:nuclear envelope"/>
    <property type="evidence" value="ECO:0000314"/>
    <property type="project" value="SGD"/>
</dbReference>
<dbReference type="GO" id="GO:0005637">
    <property type="term" value="C:nuclear inner membrane"/>
    <property type="evidence" value="ECO:0000314"/>
    <property type="project" value="SGD"/>
</dbReference>
<dbReference type="GO" id="GO:0061630">
    <property type="term" value="F:ubiquitin protein ligase activity"/>
    <property type="evidence" value="ECO:0000314"/>
    <property type="project" value="SGD"/>
</dbReference>
<dbReference type="GO" id="GO:0004842">
    <property type="term" value="F:ubiquitin-protein transferase activity"/>
    <property type="evidence" value="ECO:0000314"/>
    <property type="project" value="SGD"/>
</dbReference>
<dbReference type="GO" id="GO:0008270">
    <property type="term" value="F:zinc ion binding"/>
    <property type="evidence" value="ECO:0007669"/>
    <property type="project" value="UniProtKB-KW"/>
</dbReference>
<dbReference type="GO" id="GO:0036503">
    <property type="term" value="P:ERAD pathway"/>
    <property type="evidence" value="ECO:0000315"/>
    <property type="project" value="SGD"/>
</dbReference>
<dbReference type="GO" id="GO:0016567">
    <property type="term" value="P:protein ubiquitination"/>
    <property type="evidence" value="ECO:0007669"/>
    <property type="project" value="UniProtKB-UniPathway"/>
</dbReference>
<dbReference type="GO" id="GO:0030970">
    <property type="term" value="P:retrograde protein transport, ER to cytosol"/>
    <property type="evidence" value="ECO:0000314"/>
    <property type="project" value="SGD"/>
</dbReference>
<dbReference type="CDD" id="cd16702">
    <property type="entry name" value="RING_CH-C4HC3_MARCH6"/>
    <property type="match status" value="1"/>
</dbReference>
<dbReference type="FunFam" id="3.30.40.10:FF:000702">
    <property type="entry name" value="Ssm4p"/>
    <property type="match status" value="1"/>
</dbReference>
<dbReference type="Gene3D" id="3.30.40.10">
    <property type="entry name" value="Zinc/RING finger domain, C3HC4 (zinc finger)"/>
    <property type="match status" value="1"/>
</dbReference>
<dbReference type="InterPro" id="IPR011016">
    <property type="entry name" value="Znf_RING-CH"/>
</dbReference>
<dbReference type="InterPro" id="IPR013083">
    <property type="entry name" value="Znf_RING/FYVE/PHD"/>
</dbReference>
<dbReference type="PANTHER" id="PTHR13145:SF0">
    <property type="entry name" value="E3 UBIQUITIN-PROTEIN LIGASE MARCHF6"/>
    <property type="match status" value="1"/>
</dbReference>
<dbReference type="PANTHER" id="PTHR13145">
    <property type="entry name" value="SSM4 PROTEIN"/>
    <property type="match status" value="1"/>
</dbReference>
<dbReference type="Pfam" id="PF12906">
    <property type="entry name" value="RINGv"/>
    <property type="match status" value="1"/>
</dbReference>
<dbReference type="SMART" id="SM00744">
    <property type="entry name" value="RINGv"/>
    <property type="match status" value="1"/>
</dbReference>
<dbReference type="SUPFAM" id="SSF57850">
    <property type="entry name" value="RING/U-box"/>
    <property type="match status" value="1"/>
</dbReference>
<dbReference type="PROSITE" id="PS51292">
    <property type="entry name" value="ZF_RING_CH"/>
    <property type="match status" value="1"/>
</dbReference>
<protein>
    <recommendedName>
        <fullName>ERAD-associated E3 ubiquitin-protein ligase DOA10</fullName>
        <ecNumber evidence="13">2.3.2.27</ecNumber>
    </recommendedName>
    <alternativeName>
        <fullName evidence="14">RING-type E3 ubiquitin transferase DOA10</fullName>
    </alternativeName>
</protein>
<organism>
    <name type="scientific">Saccharomyces cerevisiae (strain ATCC 204508 / S288c)</name>
    <name type="common">Baker's yeast</name>
    <dbReference type="NCBI Taxonomy" id="559292"/>
    <lineage>
        <taxon>Eukaryota</taxon>
        <taxon>Fungi</taxon>
        <taxon>Dikarya</taxon>
        <taxon>Ascomycota</taxon>
        <taxon>Saccharomycotina</taxon>
        <taxon>Saccharomycetes</taxon>
        <taxon>Saccharomycetales</taxon>
        <taxon>Saccharomycetaceae</taxon>
        <taxon>Saccharomyces</taxon>
    </lineage>
</organism>
<keyword id="KW-0002">3D-structure</keyword>
<keyword id="KW-0007">Acetylation</keyword>
<keyword id="KW-0256">Endoplasmic reticulum</keyword>
<keyword id="KW-0472">Membrane</keyword>
<keyword id="KW-0479">Metal-binding</keyword>
<keyword id="KW-0539">Nucleus</keyword>
<keyword id="KW-1185">Reference proteome</keyword>
<keyword id="KW-0808">Transferase</keyword>
<keyword id="KW-0812">Transmembrane</keyword>
<keyword id="KW-1133">Transmembrane helix</keyword>
<keyword id="KW-0833">Ubl conjugation pathway</keyword>
<keyword id="KW-0862">Zinc</keyword>
<keyword id="KW-0863">Zinc-finger</keyword>